<protein>
    <recommendedName>
        <fullName evidence="1">ATP-dependent Clp protease ATP-binding subunit ClpX</fullName>
    </recommendedName>
</protein>
<sequence>MAKKTPGTNGKQKLFCSFCGKEQDAVKRLVAGPGVYICDECISLCNEIIAEDHEHSHEKSEVFSEIPNPVDIKSILDQYVIGQDHAKKALSVAVYNHYKRVNLKEKKSDVEIEKSNILLIGPTGSGKTLLAQTLARIIKVPFAIVDATALTEAGYVGEDVENIILKLIQNAENDIKKAEIGIIYIDEVDKIARKSDSASITRDVSGEGVQQALLKIIEGTIANVPPQGGRKHPHQEYLQVDTKNILFILGGAFVDLPNIIKSRTGVKTIGFGSEEQRIQAENKDTLMEQVIPEDLIKFGLIPEFIGRLPIVATLQELNVDMLKQIFREPKNSVLKQYTRLLELENVKLTFHEDAIDKIAELAIKRESGARGLRAIVENIMLDLMFDIPSRKDIEEVIITAEVITDRVTPTLILKKESKIA</sequence>
<reference key="1">
    <citation type="journal article" date="2006" name="Proc. Natl. Acad. Sci. U.S.A.">
        <title>Genome reduction in Leptospira borgpetersenii reflects limited transmission potential.</title>
        <authorList>
            <person name="Bulach D.M."/>
            <person name="Zuerner R.L."/>
            <person name="Wilson P."/>
            <person name="Seemann T."/>
            <person name="McGrath A."/>
            <person name="Cullen P.A."/>
            <person name="Davis J."/>
            <person name="Johnson M."/>
            <person name="Kuczek E."/>
            <person name="Alt D.P."/>
            <person name="Peterson-Burch B."/>
            <person name="Coppel R.L."/>
            <person name="Rood J.I."/>
            <person name="Davies J.K."/>
            <person name="Adler B."/>
        </authorList>
    </citation>
    <scope>NUCLEOTIDE SEQUENCE [LARGE SCALE GENOMIC DNA]</scope>
    <source>
        <strain>JB197</strain>
    </source>
</reference>
<organism>
    <name type="scientific">Leptospira borgpetersenii serovar Hardjo-bovis (strain JB197)</name>
    <dbReference type="NCBI Taxonomy" id="355277"/>
    <lineage>
        <taxon>Bacteria</taxon>
        <taxon>Pseudomonadati</taxon>
        <taxon>Spirochaetota</taxon>
        <taxon>Spirochaetia</taxon>
        <taxon>Leptospirales</taxon>
        <taxon>Leptospiraceae</taxon>
        <taxon>Leptospira</taxon>
    </lineage>
</organism>
<name>CLPX_LEPBJ</name>
<keyword id="KW-0067">ATP-binding</keyword>
<keyword id="KW-0143">Chaperone</keyword>
<keyword id="KW-0479">Metal-binding</keyword>
<keyword id="KW-0547">Nucleotide-binding</keyword>
<keyword id="KW-0862">Zinc</keyword>
<gene>
    <name evidence="1" type="primary">clpX</name>
    <name type="ordered locus">LBJ_1085</name>
</gene>
<comment type="function">
    <text evidence="1">ATP-dependent specificity component of the Clp protease. It directs the protease to specific substrates. Can perform chaperone functions in the absence of ClpP.</text>
</comment>
<comment type="subunit">
    <text evidence="1">Component of the ClpX-ClpP complex. Forms a hexameric ring that, in the presence of ATP, binds to fourteen ClpP subunits assembled into a disk-like structure with a central cavity, resembling the structure of eukaryotic proteasomes.</text>
</comment>
<comment type="similarity">
    <text evidence="1">Belongs to the ClpX chaperone family.</text>
</comment>
<evidence type="ECO:0000255" key="1">
    <source>
        <dbReference type="HAMAP-Rule" id="MF_00175"/>
    </source>
</evidence>
<evidence type="ECO:0000255" key="2">
    <source>
        <dbReference type="PROSITE-ProRule" id="PRU01250"/>
    </source>
</evidence>
<accession>Q04TR3</accession>
<feature type="chain" id="PRO_1000024575" description="ATP-dependent Clp protease ATP-binding subunit ClpX">
    <location>
        <begin position="1"/>
        <end position="420"/>
    </location>
</feature>
<feature type="domain" description="ClpX-type ZB" evidence="2">
    <location>
        <begin position="3"/>
        <end position="57"/>
    </location>
</feature>
<feature type="binding site" evidence="2">
    <location>
        <position position="16"/>
    </location>
    <ligand>
        <name>Zn(2+)</name>
        <dbReference type="ChEBI" id="CHEBI:29105"/>
    </ligand>
</feature>
<feature type="binding site" evidence="2">
    <location>
        <position position="19"/>
    </location>
    <ligand>
        <name>Zn(2+)</name>
        <dbReference type="ChEBI" id="CHEBI:29105"/>
    </ligand>
</feature>
<feature type="binding site" evidence="2">
    <location>
        <position position="38"/>
    </location>
    <ligand>
        <name>Zn(2+)</name>
        <dbReference type="ChEBI" id="CHEBI:29105"/>
    </ligand>
</feature>
<feature type="binding site" evidence="2">
    <location>
        <position position="41"/>
    </location>
    <ligand>
        <name>Zn(2+)</name>
        <dbReference type="ChEBI" id="CHEBI:29105"/>
    </ligand>
</feature>
<feature type="binding site" evidence="1">
    <location>
        <begin position="122"/>
        <end position="129"/>
    </location>
    <ligand>
        <name>ATP</name>
        <dbReference type="ChEBI" id="CHEBI:30616"/>
    </ligand>
</feature>
<proteinExistence type="inferred from homology"/>
<dbReference type="EMBL" id="CP000350">
    <property type="protein sequence ID" value="ABJ75707.1"/>
    <property type="molecule type" value="Genomic_DNA"/>
</dbReference>
<dbReference type="RefSeq" id="WP_002755134.1">
    <property type="nucleotide sequence ID" value="NC_008510.1"/>
</dbReference>
<dbReference type="SMR" id="Q04TR3"/>
<dbReference type="KEGG" id="lbj:LBJ_1085"/>
<dbReference type="HOGENOM" id="CLU_014218_8_2_12"/>
<dbReference type="Proteomes" id="UP000000656">
    <property type="component" value="Chromosome 1"/>
</dbReference>
<dbReference type="GO" id="GO:0009376">
    <property type="term" value="C:HslUV protease complex"/>
    <property type="evidence" value="ECO:0007669"/>
    <property type="project" value="TreeGrafter"/>
</dbReference>
<dbReference type="GO" id="GO:0005524">
    <property type="term" value="F:ATP binding"/>
    <property type="evidence" value="ECO:0007669"/>
    <property type="project" value="UniProtKB-UniRule"/>
</dbReference>
<dbReference type="GO" id="GO:0016887">
    <property type="term" value="F:ATP hydrolysis activity"/>
    <property type="evidence" value="ECO:0007669"/>
    <property type="project" value="InterPro"/>
</dbReference>
<dbReference type="GO" id="GO:0140662">
    <property type="term" value="F:ATP-dependent protein folding chaperone"/>
    <property type="evidence" value="ECO:0007669"/>
    <property type="project" value="InterPro"/>
</dbReference>
<dbReference type="GO" id="GO:0046983">
    <property type="term" value="F:protein dimerization activity"/>
    <property type="evidence" value="ECO:0007669"/>
    <property type="project" value="InterPro"/>
</dbReference>
<dbReference type="GO" id="GO:0051082">
    <property type="term" value="F:unfolded protein binding"/>
    <property type="evidence" value="ECO:0007669"/>
    <property type="project" value="UniProtKB-UniRule"/>
</dbReference>
<dbReference type="GO" id="GO:0008270">
    <property type="term" value="F:zinc ion binding"/>
    <property type="evidence" value="ECO:0007669"/>
    <property type="project" value="InterPro"/>
</dbReference>
<dbReference type="GO" id="GO:0051301">
    <property type="term" value="P:cell division"/>
    <property type="evidence" value="ECO:0007669"/>
    <property type="project" value="TreeGrafter"/>
</dbReference>
<dbReference type="GO" id="GO:0051603">
    <property type="term" value="P:proteolysis involved in protein catabolic process"/>
    <property type="evidence" value="ECO:0007669"/>
    <property type="project" value="TreeGrafter"/>
</dbReference>
<dbReference type="CDD" id="cd19497">
    <property type="entry name" value="RecA-like_ClpX"/>
    <property type="match status" value="1"/>
</dbReference>
<dbReference type="FunFam" id="1.10.8.60:FF:000002">
    <property type="entry name" value="ATP-dependent Clp protease ATP-binding subunit ClpX"/>
    <property type="match status" value="1"/>
</dbReference>
<dbReference type="FunFam" id="3.40.50.300:FF:000005">
    <property type="entry name" value="ATP-dependent Clp protease ATP-binding subunit ClpX"/>
    <property type="match status" value="1"/>
</dbReference>
<dbReference type="Gene3D" id="1.10.8.60">
    <property type="match status" value="1"/>
</dbReference>
<dbReference type="Gene3D" id="6.20.220.10">
    <property type="entry name" value="ClpX chaperone, C4-type zinc finger domain"/>
    <property type="match status" value="1"/>
</dbReference>
<dbReference type="Gene3D" id="3.40.50.300">
    <property type="entry name" value="P-loop containing nucleotide triphosphate hydrolases"/>
    <property type="match status" value="1"/>
</dbReference>
<dbReference type="HAMAP" id="MF_00175">
    <property type="entry name" value="ClpX"/>
    <property type="match status" value="1"/>
</dbReference>
<dbReference type="InterPro" id="IPR003593">
    <property type="entry name" value="AAA+_ATPase"/>
</dbReference>
<dbReference type="InterPro" id="IPR050052">
    <property type="entry name" value="ATP-dep_Clp_protease_ClpX"/>
</dbReference>
<dbReference type="InterPro" id="IPR003959">
    <property type="entry name" value="ATPase_AAA_core"/>
</dbReference>
<dbReference type="InterPro" id="IPR019489">
    <property type="entry name" value="Clp_ATPase_C"/>
</dbReference>
<dbReference type="InterPro" id="IPR004487">
    <property type="entry name" value="Clp_protease_ATP-bd_su_ClpX"/>
</dbReference>
<dbReference type="InterPro" id="IPR046425">
    <property type="entry name" value="ClpX_bact"/>
</dbReference>
<dbReference type="InterPro" id="IPR027417">
    <property type="entry name" value="P-loop_NTPase"/>
</dbReference>
<dbReference type="InterPro" id="IPR010603">
    <property type="entry name" value="Znf_CppX_C4"/>
</dbReference>
<dbReference type="InterPro" id="IPR038366">
    <property type="entry name" value="Znf_CppX_C4_sf"/>
</dbReference>
<dbReference type="NCBIfam" id="TIGR00382">
    <property type="entry name" value="clpX"/>
    <property type="match status" value="1"/>
</dbReference>
<dbReference type="NCBIfam" id="NF003745">
    <property type="entry name" value="PRK05342.1"/>
    <property type="match status" value="1"/>
</dbReference>
<dbReference type="PANTHER" id="PTHR48102:SF7">
    <property type="entry name" value="ATP-DEPENDENT CLP PROTEASE ATP-BINDING SUBUNIT CLPX-LIKE, MITOCHONDRIAL"/>
    <property type="match status" value="1"/>
</dbReference>
<dbReference type="PANTHER" id="PTHR48102">
    <property type="entry name" value="ATP-DEPENDENT CLP PROTEASE ATP-BINDING SUBUNIT CLPX-LIKE, MITOCHONDRIAL-RELATED"/>
    <property type="match status" value="1"/>
</dbReference>
<dbReference type="Pfam" id="PF07724">
    <property type="entry name" value="AAA_2"/>
    <property type="match status" value="1"/>
</dbReference>
<dbReference type="Pfam" id="PF10431">
    <property type="entry name" value="ClpB_D2-small"/>
    <property type="match status" value="1"/>
</dbReference>
<dbReference type="Pfam" id="PF06689">
    <property type="entry name" value="zf-C4_ClpX"/>
    <property type="match status" value="1"/>
</dbReference>
<dbReference type="SMART" id="SM00382">
    <property type="entry name" value="AAA"/>
    <property type="match status" value="1"/>
</dbReference>
<dbReference type="SMART" id="SM01086">
    <property type="entry name" value="ClpB_D2-small"/>
    <property type="match status" value="1"/>
</dbReference>
<dbReference type="SMART" id="SM00994">
    <property type="entry name" value="zf-C4_ClpX"/>
    <property type="match status" value="1"/>
</dbReference>
<dbReference type="SUPFAM" id="SSF57716">
    <property type="entry name" value="Glucocorticoid receptor-like (DNA-binding domain)"/>
    <property type="match status" value="1"/>
</dbReference>
<dbReference type="SUPFAM" id="SSF52540">
    <property type="entry name" value="P-loop containing nucleoside triphosphate hydrolases"/>
    <property type="match status" value="1"/>
</dbReference>
<dbReference type="PROSITE" id="PS51902">
    <property type="entry name" value="CLPX_ZB"/>
    <property type="match status" value="1"/>
</dbReference>